<accession>P0DPL0</accession>
<sequence>CCGPTACVAGCKPCC</sequence>
<proteinExistence type="evidence at protein level"/>
<protein>
    <recommendedName>
        <fullName evidence="3">Conotoxin SI.6</fullName>
    </recommendedName>
</protein>
<dbReference type="GO" id="GO:0005576">
    <property type="term" value="C:extracellular region"/>
    <property type="evidence" value="ECO:0007669"/>
    <property type="project" value="UniProtKB-SubCell"/>
</dbReference>
<dbReference type="GO" id="GO:0090729">
    <property type="term" value="F:toxin activity"/>
    <property type="evidence" value="ECO:0007669"/>
    <property type="project" value="UniProtKB-KW"/>
</dbReference>
<feature type="peptide" id="PRO_0000445046" description="Conotoxin SI.6" evidence="2">
    <location>
        <begin position="1"/>
        <end position="15"/>
    </location>
</feature>
<feature type="modified residue" description="4-hydroxyproline" evidence="2">
    <location>
        <position position="4"/>
    </location>
</feature>
<feature type="modified residue" description="4-hydroxyproline" evidence="2">
    <location>
        <position position="13"/>
    </location>
</feature>
<feature type="modified residue" description="Cysteine amide" evidence="2">
    <location>
        <position position="15"/>
    </location>
</feature>
<feature type="disulfide bond" evidence="1">
    <location>
        <begin position="1"/>
        <end position="15"/>
    </location>
</feature>
<feature type="disulfide bond" evidence="1">
    <location>
        <begin position="2"/>
        <end position="11"/>
    </location>
</feature>
<feature type="disulfide bond" evidence="1">
    <location>
        <begin position="7"/>
        <end position="14"/>
    </location>
</feature>
<comment type="subcellular location">
    <subcellularLocation>
        <location evidence="2">Secreted</location>
    </subcellularLocation>
</comment>
<comment type="tissue specificity">
    <text evidence="4">Expressed by the venom duct.</text>
</comment>
<comment type="domain">
    <text evidence="3">The cysteine framework is III (CC-C-C-CC). Classified in the M-2 branch, since 2 residues stand between the fourth and the fifth cysteine residues.</text>
</comment>
<comment type="similarity">
    <text evidence="3">Belongs to the conotoxin M superfamily.</text>
</comment>
<reference key="1">
    <citation type="journal article" date="2012" name="J. Proteome Res.">
        <title>Constrained de novo sequencing of conotoxins.</title>
        <authorList>
            <person name="Bhatia S."/>
            <person name="Kil Y.J."/>
            <person name="Ueberheide B."/>
            <person name="Chait B.T."/>
            <person name="Tayo L."/>
            <person name="Cruz L."/>
            <person name="Lu B."/>
            <person name="Yates J.R. III"/>
            <person name="Bern M."/>
        </authorList>
    </citation>
    <scope>PROTEIN SEQUENCE</scope>
    <scope>IDENTIFICATION BY MASS SPECTROMETRY</scope>
    <scope>SUBCELLULAR LOCATION</scope>
    <scope>HYDROXYLATION AT PRO-4</scope>
    <scope>HYDROXYLATION AT PRO-13</scope>
    <scope>AMIDATION AT CYS-15</scope>
    <source>
        <tissue>Venom</tissue>
    </source>
</reference>
<keyword id="KW-0027">Amidation</keyword>
<keyword id="KW-0903">Direct protein sequencing</keyword>
<keyword id="KW-1015">Disulfide bond</keyword>
<keyword id="KW-0379">Hydroxylation</keyword>
<keyword id="KW-0964">Secreted</keyword>
<keyword id="KW-0800">Toxin</keyword>
<organism>
    <name type="scientific">Conus textile</name>
    <name type="common">Cloth-of-gold cone</name>
    <dbReference type="NCBI Taxonomy" id="6494"/>
    <lineage>
        <taxon>Eukaryota</taxon>
        <taxon>Metazoa</taxon>
        <taxon>Spiralia</taxon>
        <taxon>Lophotrochozoa</taxon>
        <taxon>Mollusca</taxon>
        <taxon>Gastropoda</taxon>
        <taxon>Caenogastropoda</taxon>
        <taxon>Neogastropoda</taxon>
        <taxon>Conoidea</taxon>
        <taxon>Conidae</taxon>
        <taxon>Conus</taxon>
        <taxon>Cylinder</taxon>
    </lineage>
</organism>
<name>M316_CONTE</name>
<evidence type="ECO:0000250" key="1">
    <source>
        <dbReference type="UniProtKB" id="P0CI24"/>
    </source>
</evidence>
<evidence type="ECO:0000269" key="2">
    <source>
    </source>
</evidence>
<evidence type="ECO:0000305" key="3"/>
<evidence type="ECO:0000305" key="4">
    <source>
    </source>
</evidence>